<reference key="1">
    <citation type="submission" date="2015-09" db="EMBL/GenBank/DDBJ databases">
        <title>Genome announcement of multiple Pseudomonas syringae strains.</title>
        <authorList>
            <person name="Thakur S."/>
            <person name="Wang P.W."/>
            <person name="Gong Y."/>
            <person name="Weir B.S."/>
            <person name="Guttman D.S."/>
        </authorList>
    </citation>
    <scope>NUCLEOTIDE SEQUENCE [LARGE SCALE GENOMIC DNA]</scope>
    <source>
        <strain>ATCC BAA-566 / CFBP 6866 / ICMP 15200 / BS91</strain>
    </source>
</reference>
<reference key="2">
    <citation type="journal article" date="2021" name="Appl. Biochem. Biotechnol.">
        <title>Biochemical properties of a novel D-mannose isomerase from Pseudomonas syringae for D-mannose production.</title>
        <authorList>
            <person name="Hua X."/>
            <person name="Li Y."/>
            <person name="Jiang Z."/>
            <person name="Ma J."/>
            <person name="Liu H."/>
            <person name="Yan Q."/>
        </authorList>
    </citation>
    <scope>FUNCTION</scope>
    <scope>CATALYTIC ACTIVITY</scope>
    <scope>ACTIVITY REGULATION</scope>
    <scope>BIOPHYSICOCHEMICAL PROPERTIES</scope>
    <scope>SUBUNIT</scope>
    <scope>BIOTECHNOLOGY</scope>
</reference>
<feature type="chain" id="PRO_0000453302" description="D-mannose isomerase">
    <location>
        <begin position="1"/>
        <end position="414"/>
    </location>
</feature>
<feature type="active site" description="Proton donor/acceptor" evidence="1">
    <location>
        <position position="255"/>
    </location>
</feature>
<feature type="active site" description="Proton donor/acceptor" evidence="1">
    <location>
        <position position="390"/>
    </location>
</feature>
<gene>
    <name evidence="5" type="ORF">ALO83_00665</name>
</gene>
<organism>
    <name type="scientific">Pseudomonas cannabina pv. alisalensis</name>
    <dbReference type="NCBI Taxonomy" id="757414"/>
    <lineage>
        <taxon>Bacteria</taxon>
        <taxon>Pseudomonadati</taxon>
        <taxon>Pseudomonadota</taxon>
        <taxon>Gammaproteobacteria</taxon>
        <taxon>Pseudomonadales</taxon>
        <taxon>Pseudomonadaceae</taxon>
        <taxon>Pseudomonas</taxon>
    </lineage>
</organism>
<protein>
    <recommendedName>
        <fullName evidence="3">D-mannose isomerase</fullName>
        <shortName evidence="3">PsMIaseA</shortName>
        <ecNumber evidence="2">5.3.1.7</ecNumber>
    </recommendedName>
</protein>
<name>MANI_PSEC1</name>
<accession>A0A0P9JFY5</accession>
<keyword id="KW-0413">Isomerase</keyword>
<proteinExistence type="evidence at protein level"/>
<comment type="function">
    <text evidence="2">Catalyzes the reversible isomerization of D-mannose to D-fructose (PubMed:33484446). Shows high specific activity towards mannose and fructose, and has no detectable activity towards other monosaccharides and disaccharides (PubMed:33484446).</text>
</comment>
<comment type="catalytic activity">
    <reaction evidence="2">
        <text>D-mannose = D-fructose</text>
        <dbReference type="Rhea" id="RHEA:22604"/>
        <dbReference type="ChEBI" id="CHEBI:4208"/>
        <dbReference type="ChEBI" id="CHEBI:37721"/>
        <dbReference type="EC" id="5.3.1.7"/>
    </reaction>
</comment>
<comment type="activity regulation">
    <text evidence="2">Strongly inhibited by Ag(2+), Cu(2+) and cetyltrimethyl ammonium bromide (CTAB).</text>
</comment>
<comment type="biophysicochemical properties">
    <kinetics>
        <KM evidence="2">36.6 mM for mannose</KM>
        <KM evidence="2">175.5 mM for fructose</KM>
        <Vmax evidence="2">1044.6 umol/min/mg enzyme with mannose as substrate</Vmax>
        <Vmax evidence="2">792.6 umol/min/mg enzyme with fructose as substrate</Vmax>
        <text evidence="2">kcat is 0.766 sec(-1) with mannose as substrate. kcat is 0.581 sec(-1) with fructose as substrate.</text>
    </kinetics>
    <phDependence>
        <text evidence="2">Optimum pH is 7.5.</text>
    </phDependence>
    <temperatureDependence>
        <text evidence="2">Optimum temperature is 40 degrees Celsius. Thermostable up to 45 degrees Celsius.</text>
    </temperatureDependence>
</comment>
<comment type="subunit">
    <text evidence="2">Monomer.</text>
</comment>
<comment type="biotechnology">
    <text evidence="2">Shows high production efficiency and may be suitable for green production of D-mannose.</text>
</comment>
<comment type="similarity">
    <text evidence="4">Belongs to the N-acylglucosamine 2-epimerase family.</text>
</comment>
<sequence>MDNNNHTFSSWLRSPAHHQWLALEGKRLLGFAKAAKLENGFGGLDDYGRLMVGATAGTMNTARMTHCFAMAHVQGIPGCAALIDHGIAALSGPLHDAEHGGWFSAALEDHGKTDKQAYLHAFVALAASSAVVAGRPAAQALLSDVIQVIQSRFWSDEEGAMRESFSQDWSDEEPYRGANSNMHSTEAFLALADVTGDAQWLDRALSIVERVIHQHAGANNFQVIEHFTSGWQPLPDYNRENPADGFRPFGTTPGHAFEWARLVLHLEAARRRAGRSNPDWLLDDARQLFANACRYGWDVDGAPGIVYTLDWQNKPVVRHRLHWTHCEAAAAAAALLQRTGEQQYEDWYRCFWEFNETLFIDIEHGSWRHELNERNEPSEDIWPGKPDLYHAYQATLLPVLPLAPSLASAMAGLD</sequence>
<evidence type="ECO:0000250" key="1">
    <source>
        <dbReference type="UniProtKB" id="Q8ZKT7"/>
    </source>
</evidence>
<evidence type="ECO:0000269" key="2">
    <source>
    </source>
</evidence>
<evidence type="ECO:0000303" key="3">
    <source>
    </source>
</evidence>
<evidence type="ECO:0000305" key="4"/>
<evidence type="ECO:0000312" key="5">
    <source>
        <dbReference type="EMBL" id="KPW23544.1"/>
    </source>
</evidence>
<dbReference type="EC" id="5.3.1.7" evidence="2"/>
<dbReference type="EMBL" id="LJPP01000116">
    <property type="protein sequence ID" value="KPW23544.1"/>
    <property type="molecule type" value="Genomic_DNA"/>
</dbReference>
<dbReference type="RefSeq" id="WP_007249212.1">
    <property type="nucleotide sequence ID" value="NZ_RBPI01000353.1"/>
</dbReference>
<dbReference type="SMR" id="A0A0P9JFY5"/>
<dbReference type="PATRIC" id="fig|663709.3.peg.1051"/>
<dbReference type="GO" id="GO:0016853">
    <property type="term" value="F:isomerase activity"/>
    <property type="evidence" value="ECO:0007669"/>
    <property type="project" value="UniProtKB-KW"/>
</dbReference>
<dbReference type="GO" id="GO:0005975">
    <property type="term" value="P:carbohydrate metabolic process"/>
    <property type="evidence" value="ECO:0007669"/>
    <property type="project" value="InterPro"/>
</dbReference>
<dbReference type="Gene3D" id="1.50.10.10">
    <property type="match status" value="1"/>
</dbReference>
<dbReference type="InterPro" id="IPR008928">
    <property type="entry name" value="6-hairpin_glycosidase_sf"/>
</dbReference>
<dbReference type="InterPro" id="IPR012341">
    <property type="entry name" value="6hp_glycosidase-like_sf"/>
</dbReference>
<dbReference type="InterPro" id="IPR010819">
    <property type="entry name" value="AGE/CE"/>
</dbReference>
<dbReference type="PANTHER" id="PTHR15108">
    <property type="entry name" value="N-ACYLGLUCOSAMINE-2-EPIMERASE"/>
    <property type="match status" value="1"/>
</dbReference>
<dbReference type="Pfam" id="PF07221">
    <property type="entry name" value="GlcNAc_2-epim"/>
    <property type="match status" value="1"/>
</dbReference>
<dbReference type="SUPFAM" id="SSF48208">
    <property type="entry name" value="Six-hairpin glycosidases"/>
    <property type="match status" value="1"/>
</dbReference>